<comment type="function">
    <text evidence="1">Catalyzes the transfer of a phosphate group to glutamate to form L-glutamate 5-phosphate.</text>
</comment>
<comment type="catalytic activity">
    <reaction evidence="1">
        <text>L-glutamate + ATP = L-glutamyl 5-phosphate + ADP</text>
        <dbReference type="Rhea" id="RHEA:14877"/>
        <dbReference type="ChEBI" id="CHEBI:29985"/>
        <dbReference type="ChEBI" id="CHEBI:30616"/>
        <dbReference type="ChEBI" id="CHEBI:58274"/>
        <dbReference type="ChEBI" id="CHEBI:456216"/>
        <dbReference type="EC" id="2.7.2.11"/>
    </reaction>
</comment>
<comment type="pathway">
    <text evidence="1">Amino-acid biosynthesis; L-proline biosynthesis; L-glutamate 5-semialdehyde from L-glutamate: step 1/2.</text>
</comment>
<comment type="subcellular location">
    <subcellularLocation>
        <location evidence="1">Cytoplasm</location>
    </subcellularLocation>
</comment>
<comment type="similarity">
    <text evidence="1">Belongs to the glutamate 5-kinase family.</text>
</comment>
<gene>
    <name evidence="1" type="primary">proB</name>
    <name type="ordered locus">SPy_1672</name>
    <name type="ordered locus">M5005_Spy1371</name>
</gene>
<protein>
    <recommendedName>
        <fullName evidence="1">Glutamate 5-kinase</fullName>
        <ecNumber evidence="1">2.7.2.11</ecNumber>
    </recommendedName>
    <alternativeName>
        <fullName evidence="1">Gamma-glutamyl kinase</fullName>
        <shortName evidence="1">GK</shortName>
    </alternativeName>
</protein>
<dbReference type="EC" id="2.7.2.11" evidence="1"/>
<dbReference type="EMBL" id="AE004092">
    <property type="protein sequence ID" value="AAK34430.1"/>
    <property type="molecule type" value="Genomic_DNA"/>
</dbReference>
<dbReference type="EMBL" id="CP000017">
    <property type="protein sequence ID" value="AAZ51989.1"/>
    <property type="molecule type" value="Genomic_DNA"/>
</dbReference>
<dbReference type="RefSeq" id="NP_269709.1">
    <property type="nucleotide sequence ID" value="NC_002737.2"/>
</dbReference>
<dbReference type="SMR" id="Q99YJ7"/>
<dbReference type="PaxDb" id="1314-HKU360_01423"/>
<dbReference type="KEGG" id="spy:SPy_1672"/>
<dbReference type="KEGG" id="spz:M5005_Spy1371"/>
<dbReference type="PATRIC" id="fig|160490.10.peg.1455"/>
<dbReference type="HOGENOM" id="CLU_025400_0_2_9"/>
<dbReference type="OMA" id="SVTELMF"/>
<dbReference type="UniPathway" id="UPA00098">
    <property type="reaction ID" value="UER00359"/>
</dbReference>
<dbReference type="Proteomes" id="UP000000750">
    <property type="component" value="Chromosome"/>
</dbReference>
<dbReference type="GO" id="GO:0005829">
    <property type="term" value="C:cytosol"/>
    <property type="evidence" value="ECO:0007669"/>
    <property type="project" value="TreeGrafter"/>
</dbReference>
<dbReference type="GO" id="GO:0005524">
    <property type="term" value="F:ATP binding"/>
    <property type="evidence" value="ECO:0007669"/>
    <property type="project" value="UniProtKB-KW"/>
</dbReference>
<dbReference type="GO" id="GO:0004349">
    <property type="term" value="F:glutamate 5-kinase activity"/>
    <property type="evidence" value="ECO:0007669"/>
    <property type="project" value="UniProtKB-UniRule"/>
</dbReference>
<dbReference type="GO" id="GO:0055129">
    <property type="term" value="P:L-proline biosynthetic process"/>
    <property type="evidence" value="ECO:0007669"/>
    <property type="project" value="UniProtKB-UniRule"/>
</dbReference>
<dbReference type="CDD" id="cd04242">
    <property type="entry name" value="AAK_G5K_ProB"/>
    <property type="match status" value="1"/>
</dbReference>
<dbReference type="FunFam" id="3.40.1160.10:FF:000006">
    <property type="entry name" value="Glutamate 5-kinase"/>
    <property type="match status" value="1"/>
</dbReference>
<dbReference type="Gene3D" id="3.40.1160.10">
    <property type="entry name" value="Acetylglutamate kinase-like"/>
    <property type="match status" value="1"/>
</dbReference>
<dbReference type="HAMAP" id="MF_00456">
    <property type="entry name" value="ProB"/>
    <property type="match status" value="1"/>
</dbReference>
<dbReference type="InterPro" id="IPR036393">
    <property type="entry name" value="AceGlu_kinase-like_sf"/>
</dbReference>
<dbReference type="InterPro" id="IPR001048">
    <property type="entry name" value="Asp/Glu/Uridylate_kinase"/>
</dbReference>
<dbReference type="InterPro" id="IPR041739">
    <property type="entry name" value="G5K_ProB"/>
</dbReference>
<dbReference type="InterPro" id="IPR001057">
    <property type="entry name" value="Glu/AcGlu_kinase"/>
</dbReference>
<dbReference type="InterPro" id="IPR011529">
    <property type="entry name" value="Glu_5kinase"/>
</dbReference>
<dbReference type="InterPro" id="IPR005715">
    <property type="entry name" value="Glu_5kinase/COase_Synthase"/>
</dbReference>
<dbReference type="InterPro" id="IPR019797">
    <property type="entry name" value="Glutamate_5-kinase_CS"/>
</dbReference>
<dbReference type="NCBIfam" id="TIGR01027">
    <property type="entry name" value="proB"/>
    <property type="match status" value="1"/>
</dbReference>
<dbReference type="PANTHER" id="PTHR43654">
    <property type="entry name" value="GLUTAMATE 5-KINASE"/>
    <property type="match status" value="1"/>
</dbReference>
<dbReference type="PANTHER" id="PTHR43654:SF1">
    <property type="entry name" value="ISOPENTENYL PHOSPHATE KINASE"/>
    <property type="match status" value="1"/>
</dbReference>
<dbReference type="Pfam" id="PF00696">
    <property type="entry name" value="AA_kinase"/>
    <property type="match status" value="1"/>
</dbReference>
<dbReference type="PIRSF" id="PIRSF000729">
    <property type="entry name" value="GK"/>
    <property type="match status" value="1"/>
</dbReference>
<dbReference type="PRINTS" id="PR00474">
    <property type="entry name" value="GLU5KINASE"/>
</dbReference>
<dbReference type="SUPFAM" id="SSF53633">
    <property type="entry name" value="Carbamate kinase-like"/>
    <property type="match status" value="1"/>
</dbReference>
<dbReference type="PROSITE" id="PS00902">
    <property type="entry name" value="GLUTAMATE_5_KINASE"/>
    <property type="match status" value="1"/>
</dbReference>
<organism>
    <name type="scientific">Streptococcus pyogenes serotype M1</name>
    <dbReference type="NCBI Taxonomy" id="301447"/>
    <lineage>
        <taxon>Bacteria</taxon>
        <taxon>Bacillati</taxon>
        <taxon>Bacillota</taxon>
        <taxon>Bacilli</taxon>
        <taxon>Lactobacillales</taxon>
        <taxon>Streptococcaceae</taxon>
        <taxon>Streptococcus</taxon>
    </lineage>
</organism>
<evidence type="ECO:0000255" key="1">
    <source>
        <dbReference type="HAMAP-Rule" id="MF_00456"/>
    </source>
</evidence>
<name>PROB_STRP1</name>
<feature type="chain" id="PRO_0000109734" description="Glutamate 5-kinase">
    <location>
        <begin position="1"/>
        <end position="273"/>
    </location>
</feature>
<feature type="binding site" evidence="1">
    <location>
        <position position="15"/>
    </location>
    <ligand>
        <name>ATP</name>
        <dbReference type="ChEBI" id="CHEBI:30616"/>
    </ligand>
</feature>
<feature type="binding site" evidence="1">
    <location>
        <position position="55"/>
    </location>
    <ligand>
        <name>substrate</name>
    </ligand>
</feature>
<feature type="binding site" evidence="1">
    <location>
        <position position="142"/>
    </location>
    <ligand>
        <name>substrate</name>
    </ligand>
</feature>
<feature type="binding site" evidence="1">
    <location>
        <position position="158"/>
    </location>
    <ligand>
        <name>substrate</name>
    </ligand>
</feature>
<feature type="binding site" evidence="1">
    <location>
        <begin position="178"/>
        <end position="179"/>
    </location>
    <ligand>
        <name>ATP</name>
        <dbReference type="ChEBI" id="CHEBI:30616"/>
    </ligand>
</feature>
<feature type="binding site" evidence="1">
    <location>
        <begin position="220"/>
        <end position="226"/>
    </location>
    <ligand>
        <name>ATP</name>
        <dbReference type="ChEBI" id="CHEBI:30616"/>
    </ligand>
</feature>
<keyword id="KW-0028">Amino-acid biosynthesis</keyword>
<keyword id="KW-0067">ATP-binding</keyword>
<keyword id="KW-0963">Cytoplasm</keyword>
<keyword id="KW-0418">Kinase</keyword>
<keyword id="KW-0547">Nucleotide-binding</keyword>
<keyword id="KW-0641">Proline biosynthesis</keyword>
<keyword id="KW-1185">Reference proteome</keyword>
<keyword id="KW-0808">Transferase</keyword>
<accession>Q99YJ7</accession>
<accession>Q48XD6</accession>
<reference key="1">
    <citation type="journal article" date="2001" name="Proc. Natl. Acad. Sci. U.S.A.">
        <title>Complete genome sequence of an M1 strain of Streptococcus pyogenes.</title>
        <authorList>
            <person name="Ferretti J.J."/>
            <person name="McShan W.M."/>
            <person name="Ajdic D.J."/>
            <person name="Savic D.J."/>
            <person name="Savic G."/>
            <person name="Lyon K."/>
            <person name="Primeaux C."/>
            <person name="Sezate S."/>
            <person name="Suvorov A.N."/>
            <person name="Kenton S."/>
            <person name="Lai H.S."/>
            <person name="Lin S.P."/>
            <person name="Qian Y."/>
            <person name="Jia H.G."/>
            <person name="Najar F.Z."/>
            <person name="Ren Q."/>
            <person name="Zhu H."/>
            <person name="Song L."/>
            <person name="White J."/>
            <person name="Yuan X."/>
            <person name="Clifton S.W."/>
            <person name="Roe B.A."/>
            <person name="McLaughlin R.E."/>
        </authorList>
    </citation>
    <scope>NUCLEOTIDE SEQUENCE [LARGE SCALE GENOMIC DNA]</scope>
    <source>
        <strain>ATCC 700294 / SF370 / Serotype M1</strain>
    </source>
</reference>
<reference key="2">
    <citation type="journal article" date="2005" name="J. Infect. Dis.">
        <title>Evolutionary origin and emergence of a highly successful clone of serotype M1 group A Streptococcus involved multiple horizontal gene transfer events.</title>
        <authorList>
            <person name="Sumby P."/>
            <person name="Porcella S.F."/>
            <person name="Madrigal A.G."/>
            <person name="Barbian K.D."/>
            <person name="Virtaneva K."/>
            <person name="Ricklefs S.M."/>
            <person name="Sturdevant D.E."/>
            <person name="Graham M.R."/>
            <person name="Vuopio-Varkila J."/>
            <person name="Hoe N.P."/>
            <person name="Musser J.M."/>
        </authorList>
    </citation>
    <scope>NUCLEOTIDE SEQUENCE [LARGE SCALE GENOMIC DNA]</scope>
    <source>
        <strain>ATCC BAA-947 / MGAS5005 / Serotype M1</strain>
    </source>
</reference>
<sequence length="273" mass="29756">MMKRQFEDVTRIVIKIGTSSLVLPTGKINLEKIDQLAFVISSLMNKGKEVILVSSGAMGFGLDILKMEKRPTNLAKQQAVSSVGQVAMMSLYSQIFAYYQTNVSQILLTRDVVVFPESLANVTNAFESLISLGIVPIVNENDAVSVDEMDHATKFGDNDRLSAVVAGITKADLLIMLSDIDGLFDKNPTIYEDAQLRSHVANITQEIIASAGGAGSKFGTGGMLSKVQSAQMVFENKGQMVLMNGANPRDILRVLEGQPLGTWFKQIEEVRHD</sequence>
<proteinExistence type="inferred from homology"/>